<feature type="chain" id="PRO_0000276518" description="Large ribosomal subunit protein bL33c">
    <location>
        <begin position="1"/>
        <end position="66"/>
    </location>
</feature>
<sequence>MAKGKDVRVTVILECTSCVRNSVDKVSRGISRYITQKNRHNTPNRFELKKFCPYCYKHTIHGEIKK</sequence>
<evidence type="ECO:0000255" key="1">
    <source>
        <dbReference type="HAMAP-Rule" id="MF_00294"/>
    </source>
</evidence>
<evidence type="ECO:0000305" key="2"/>
<accession>Q2VEF7</accession>
<gene>
    <name evidence="1" type="primary">rpl33</name>
</gene>
<comment type="subcellular location">
    <subcellularLocation>
        <location>Plastid</location>
        <location>Chloroplast</location>
    </subcellularLocation>
</comment>
<comment type="similarity">
    <text evidence="1">Belongs to the bacterial ribosomal protein bL33 family.</text>
</comment>
<dbReference type="EMBL" id="DQ231562">
    <property type="protein sequence ID" value="ABB90061.1"/>
    <property type="molecule type" value="Genomic_DNA"/>
</dbReference>
<dbReference type="EMBL" id="DQ386163">
    <property type="protein sequence ID" value="ABD47078.1"/>
    <property type="molecule type" value="Genomic_DNA"/>
</dbReference>
<dbReference type="RefSeq" id="YP_635660.1">
    <property type="nucleotide sequence ID" value="NC_008096.2"/>
</dbReference>
<dbReference type="FunCoup" id="Q2VEF7">
    <property type="interactions" value="32"/>
</dbReference>
<dbReference type="STRING" id="4113.Q2VEF7"/>
<dbReference type="GeneID" id="4099867"/>
<dbReference type="KEGG" id="sot:4099867"/>
<dbReference type="InParanoid" id="Q2VEF7"/>
<dbReference type="OrthoDB" id="361870at2759"/>
<dbReference type="Proteomes" id="UP000011115">
    <property type="component" value="Unassembled WGS sequence"/>
</dbReference>
<dbReference type="GO" id="GO:0009507">
    <property type="term" value="C:chloroplast"/>
    <property type="evidence" value="ECO:0007669"/>
    <property type="project" value="UniProtKB-SubCell"/>
</dbReference>
<dbReference type="GO" id="GO:1990904">
    <property type="term" value="C:ribonucleoprotein complex"/>
    <property type="evidence" value="ECO:0007669"/>
    <property type="project" value="UniProtKB-KW"/>
</dbReference>
<dbReference type="GO" id="GO:0005840">
    <property type="term" value="C:ribosome"/>
    <property type="evidence" value="ECO:0007669"/>
    <property type="project" value="UniProtKB-KW"/>
</dbReference>
<dbReference type="GO" id="GO:0003735">
    <property type="term" value="F:structural constituent of ribosome"/>
    <property type="evidence" value="ECO:0007669"/>
    <property type="project" value="InterPro"/>
</dbReference>
<dbReference type="GO" id="GO:0006412">
    <property type="term" value="P:translation"/>
    <property type="evidence" value="ECO:0007669"/>
    <property type="project" value="UniProtKB-UniRule"/>
</dbReference>
<dbReference type="Gene3D" id="2.20.28.120">
    <property type="entry name" value="Ribosomal protein L33"/>
    <property type="match status" value="1"/>
</dbReference>
<dbReference type="HAMAP" id="MF_00294">
    <property type="entry name" value="Ribosomal_bL33"/>
    <property type="match status" value="1"/>
</dbReference>
<dbReference type="InterPro" id="IPR001705">
    <property type="entry name" value="Ribosomal_bL33"/>
</dbReference>
<dbReference type="InterPro" id="IPR018264">
    <property type="entry name" value="Ribosomal_bL33_CS"/>
</dbReference>
<dbReference type="InterPro" id="IPR038584">
    <property type="entry name" value="Ribosomal_bL33_sf"/>
</dbReference>
<dbReference type="InterPro" id="IPR011332">
    <property type="entry name" value="Ribosomal_zn-bd"/>
</dbReference>
<dbReference type="NCBIfam" id="NF001764">
    <property type="entry name" value="PRK00504.1"/>
    <property type="match status" value="1"/>
</dbReference>
<dbReference type="NCBIfam" id="NF001860">
    <property type="entry name" value="PRK00595.1"/>
    <property type="match status" value="1"/>
</dbReference>
<dbReference type="NCBIfam" id="TIGR01023">
    <property type="entry name" value="rpmG_bact"/>
    <property type="match status" value="1"/>
</dbReference>
<dbReference type="PANTHER" id="PTHR43168">
    <property type="entry name" value="50S RIBOSOMAL PROTEIN L33, CHLOROPLASTIC"/>
    <property type="match status" value="1"/>
</dbReference>
<dbReference type="PANTHER" id="PTHR43168:SF2">
    <property type="entry name" value="LARGE RIBOSOMAL SUBUNIT PROTEIN BL33C"/>
    <property type="match status" value="1"/>
</dbReference>
<dbReference type="Pfam" id="PF00471">
    <property type="entry name" value="Ribosomal_L33"/>
    <property type="match status" value="1"/>
</dbReference>
<dbReference type="SUPFAM" id="SSF57829">
    <property type="entry name" value="Zn-binding ribosomal proteins"/>
    <property type="match status" value="1"/>
</dbReference>
<dbReference type="PROSITE" id="PS00582">
    <property type="entry name" value="RIBOSOMAL_L33"/>
    <property type="match status" value="1"/>
</dbReference>
<organism>
    <name type="scientific">Solanum tuberosum</name>
    <name type="common">Potato</name>
    <dbReference type="NCBI Taxonomy" id="4113"/>
    <lineage>
        <taxon>Eukaryota</taxon>
        <taxon>Viridiplantae</taxon>
        <taxon>Streptophyta</taxon>
        <taxon>Embryophyta</taxon>
        <taxon>Tracheophyta</taxon>
        <taxon>Spermatophyta</taxon>
        <taxon>Magnoliopsida</taxon>
        <taxon>eudicotyledons</taxon>
        <taxon>Gunneridae</taxon>
        <taxon>Pentapetalae</taxon>
        <taxon>asterids</taxon>
        <taxon>lamiids</taxon>
        <taxon>Solanales</taxon>
        <taxon>Solanaceae</taxon>
        <taxon>Solanoideae</taxon>
        <taxon>Solaneae</taxon>
        <taxon>Solanum</taxon>
    </lineage>
</organism>
<name>RK33_SOLTU</name>
<geneLocation type="chloroplast"/>
<protein>
    <recommendedName>
        <fullName evidence="1">Large ribosomal subunit protein bL33c</fullName>
    </recommendedName>
    <alternativeName>
        <fullName evidence="2">50S ribosomal protein L33, chloroplastic</fullName>
    </alternativeName>
</protein>
<reference key="1">
    <citation type="journal article" date="2006" name="Plant Cell Rep.">
        <title>The complete chloroplast genome sequences of Solanum tuberosum and comparative analysis with Solanaceae species identified the presence of a 241-bp deletion in cultivated potato chloroplast DNA sequence.</title>
        <authorList>
            <person name="Chung H.-J."/>
            <person name="Jung J.D."/>
            <person name="Park H.-W."/>
            <person name="Kim J.-H."/>
            <person name="Cha H.W."/>
            <person name="Min S.R."/>
            <person name="Jeong W.-J."/>
            <person name="Liu J.R."/>
        </authorList>
    </citation>
    <scope>NUCLEOTIDE SEQUENCE [LARGE SCALE GENOMIC DNA]</scope>
    <source>
        <strain>cv. Desiree</strain>
    </source>
</reference>
<reference key="2">
    <citation type="submission" date="2006-02" db="EMBL/GenBank/DDBJ databases">
        <title>Complete chloroplast genome sequences of Solanum tuberosum cultivar Desiree and comparative analyses with other Solanaceae genomes.</title>
        <authorList>
            <person name="Gargano D."/>
            <person name="Scotti N."/>
            <person name="Vezzi A."/>
            <person name="Bilardi A."/>
            <person name="Valle G."/>
            <person name="Grillo S."/>
            <person name="Cardi T."/>
        </authorList>
    </citation>
    <scope>NUCLEOTIDE SEQUENCE [LARGE SCALE GENOMIC DNA]</scope>
    <source>
        <strain>cv. Desiree</strain>
    </source>
</reference>
<proteinExistence type="inferred from homology"/>
<keyword id="KW-0150">Chloroplast</keyword>
<keyword id="KW-0934">Plastid</keyword>
<keyword id="KW-1185">Reference proteome</keyword>
<keyword id="KW-0687">Ribonucleoprotein</keyword>
<keyword id="KW-0689">Ribosomal protein</keyword>